<evidence type="ECO:0000255" key="1">
    <source>
        <dbReference type="HAMAP-Rule" id="MF_01363"/>
    </source>
</evidence>
<evidence type="ECO:0000305" key="2"/>
<gene>
    <name evidence="1" type="primary">rplU</name>
    <name type="ordered locus">LBA1338</name>
</gene>
<sequence length="103" mass="11341">MYAIIKTGGKQYKVAEGDSVFVEKLDAAEGSEVTFDEVILVANGDDVKVGTPLVDGAKVTAKVEKQGKEKKVVTFKYKPKKHSHSKYGHRQPYTKVTVEKIEA</sequence>
<protein>
    <recommendedName>
        <fullName evidence="1">Large ribosomal subunit protein bL21</fullName>
    </recommendedName>
    <alternativeName>
        <fullName evidence="2">50S ribosomal protein L21</fullName>
    </alternativeName>
</protein>
<proteinExistence type="inferred from homology"/>
<dbReference type="EMBL" id="CP000033">
    <property type="protein sequence ID" value="AAV43165.1"/>
    <property type="molecule type" value="Genomic_DNA"/>
</dbReference>
<dbReference type="RefSeq" id="WP_003547952.1">
    <property type="nucleotide sequence ID" value="NC_006814.3"/>
</dbReference>
<dbReference type="RefSeq" id="YP_194196.1">
    <property type="nucleotide sequence ID" value="NC_006814.3"/>
</dbReference>
<dbReference type="SMR" id="Q5FJF9"/>
<dbReference type="STRING" id="272621.LBA1338"/>
<dbReference type="GeneID" id="93289579"/>
<dbReference type="KEGG" id="lac:LBA1338"/>
<dbReference type="PATRIC" id="fig|272621.13.peg.1266"/>
<dbReference type="eggNOG" id="COG0261">
    <property type="taxonomic scope" value="Bacteria"/>
</dbReference>
<dbReference type="HOGENOM" id="CLU_061463_3_2_9"/>
<dbReference type="OrthoDB" id="9813334at2"/>
<dbReference type="BioCyc" id="LACI272621:G1G49-1315-MONOMER"/>
<dbReference type="Proteomes" id="UP000006381">
    <property type="component" value="Chromosome"/>
</dbReference>
<dbReference type="GO" id="GO:0005737">
    <property type="term" value="C:cytoplasm"/>
    <property type="evidence" value="ECO:0007669"/>
    <property type="project" value="UniProtKB-ARBA"/>
</dbReference>
<dbReference type="GO" id="GO:1990904">
    <property type="term" value="C:ribonucleoprotein complex"/>
    <property type="evidence" value="ECO:0007669"/>
    <property type="project" value="UniProtKB-KW"/>
</dbReference>
<dbReference type="GO" id="GO:0005840">
    <property type="term" value="C:ribosome"/>
    <property type="evidence" value="ECO:0007669"/>
    <property type="project" value="UniProtKB-KW"/>
</dbReference>
<dbReference type="GO" id="GO:0019843">
    <property type="term" value="F:rRNA binding"/>
    <property type="evidence" value="ECO:0007669"/>
    <property type="project" value="UniProtKB-UniRule"/>
</dbReference>
<dbReference type="GO" id="GO:0003735">
    <property type="term" value="F:structural constituent of ribosome"/>
    <property type="evidence" value="ECO:0007669"/>
    <property type="project" value="InterPro"/>
</dbReference>
<dbReference type="GO" id="GO:0006412">
    <property type="term" value="P:translation"/>
    <property type="evidence" value="ECO:0007669"/>
    <property type="project" value="UniProtKB-UniRule"/>
</dbReference>
<dbReference type="HAMAP" id="MF_01363">
    <property type="entry name" value="Ribosomal_bL21"/>
    <property type="match status" value="1"/>
</dbReference>
<dbReference type="InterPro" id="IPR028909">
    <property type="entry name" value="bL21-like"/>
</dbReference>
<dbReference type="InterPro" id="IPR036164">
    <property type="entry name" value="bL21-like_sf"/>
</dbReference>
<dbReference type="InterPro" id="IPR001787">
    <property type="entry name" value="Ribosomal_bL21"/>
</dbReference>
<dbReference type="InterPro" id="IPR018258">
    <property type="entry name" value="Ribosomal_bL21_CS"/>
</dbReference>
<dbReference type="NCBIfam" id="TIGR00061">
    <property type="entry name" value="L21"/>
    <property type="match status" value="1"/>
</dbReference>
<dbReference type="PANTHER" id="PTHR21349">
    <property type="entry name" value="50S RIBOSOMAL PROTEIN L21"/>
    <property type="match status" value="1"/>
</dbReference>
<dbReference type="PANTHER" id="PTHR21349:SF0">
    <property type="entry name" value="LARGE RIBOSOMAL SUBUNIT PROTEIN BL21M"/>
    <property type="match status" value="1"/>
</dbReference>
<dbReference type="Pfam" id="PF00829">
    <property type="entry name" value="Ribosomal_L21p"/>
    <property type="match status" value="1"/>
</dbReference>
<dbReference type="SUPFAM" id="SSF141091">
    <property type="entry name" value="L21p-like"/>
    <property type="match status" value="1"/>
</dbReference>
<dbReference type="PROSITE" id="PS01169">
    <property type="entry name" value="RIBOSOMAL_L21"/>
    <property type="match status" value="1"/>
</dbReference>
<reference key="1">
    <citation type="journal article" date="2005" name="Proc. Natl. Acad. Sci. U.S.A.">
        <title>Complete genome sequence of the probiotic lactic acid bacterium Lactobacillus acidophilus NCFM.</title>
        <authorList>
            <person name="Altermann E."/>
            <person name="Russell W.M."/>
            <person name="Azcarate-Peril M.A."/>
            <person name="Barrangou R."/>
            <person name="Buck B.L."/>
            <person name="McAuliffe O."/>
            <person name="Souther N."/>
            <person name="Dobson A."/>
            <person name="Duong T."/>
            <person name="Callanan M."/>
            <person name="Lick S."/>
            <person name="Hamrick A."/>
            <person name="Cano R."/>
            <person name="Klaenhammer T.R."/>
        </authorList>
    </citation>
    <scope>NUCLEOTIDE SEQUENCE [LARGE SCALE GENOMIC DNA]</scope>
    <source>
        <strain>ATCC 700396 / NCK56 / N2 / NCFM</strain>
    </source>
</reference>
<comment type="function">
    <text evidence="1">This protein binds to 23S rRNA in the presence of protein L20.</text>
</comment>
<comment type="subunit">
    <text evidence="1">Part of the 50S ribosomal subunit. Contacts protein L20.</text>
</comment>
<comment type="similarity">
    <text evidence="1">Belongs to the bacterial ribosomal protein bL21 family.</text>
</comment>
<feature type="chain" id="PRO_0000269328" description="Large ribosomal subunit protein bL21">
    <location>
        <begin position="1"/>
        <end position="103"/>
    </location>
</feature>
<keyword id="KW-1185">Reference proteome</keyword>
<keyword id="KW-0687">Ribonucleoprotein</keyword>
<keyword id="KW-0689">Ribosomal protein</keyword>
<keyword id="KW-0694">RNA-binding</keyword>
<keyword id="KW-0699">rRNA-binding</keyword>
<name>RL21_LACAC</name>
<organism>
    <name type="scientific">Lactobacillus acidophilus (strain ATCC 700396 / NCK56 / N2 / NCFM)</name>
    <dbReference type="NCBI Taxonomy" id="272621"/>
    <lineage>
        <taxon>Bacteria</taxon>
        <taxon>Bacillati</taxon>
        <taxon>Bacillota</taxon>
        <taxon>Bacilli</taxon>
        <taxon>Lactobacillales</taxon>
        <taxon>Lactobacillaceae</taxon>
        <taxon>Lactobacillus</taxon>
    </lineage>
</organism>
<accession>Q5FJF9</accession>